<protein>
    <recommendedName>
        <fullName evidence="1">Glycine cleavage system H protein</fullName>
    </recommendedName>
</protein>
<accession>Q1CB43</accession>
<gene>
    <name evidence="1" type="primary">gcvH</name>
    <name type="ordered locus">YPA_0361</name>
</gene>
<organism>
    <name type="scientific">Yersinia pestis bv. Antiqua (strain Antiqua)</name>
    <dbReference type="NCBI Taxonomy" id="360102"/>
    <lineage>
        <taxon>Bacteria</taxon>
        <taxon>Pseudomonadati</taxon>
        <taxon>Pseudomonadota</taxon>
        <taxon>Gammaproteobacteria</taxon>
        <taxon>Enterobacterales</taxon>
        <taxon>Yersiniaceae</taxon>
        <taxon>Yersinia</taxon>
    </lineage>
</organism>
<proteinExistence type="inferred from homology"/>
<dbReference type="EMBL" id="CP000308">
    <property type="protein sequence ID" value="ABG12329.1"/>
    <property type="molecule type" value="Genomic_DNA"/>
</dbReference>
<dbReference type="RefSeq" id="WP_002209948.1">
    <property type="nucleotide sequence ID" value="NZ_CP009906.1"/>
</dbReference>
<dbReference type="SMR" id="Q1CB43"/>
<dbReference type="GeneID" id="57973734"/>
<dbReference type="KEGG" id="ypa:YPA_0361"/>
<dbReference type="Proteomes" id="UP000001971">
    <property type="component" value="Chromosome"/>
</dbReference>
<dbReference type="GO" id="GO:0005829">
    <property type="term" value="C:cytosol"/>
    <property type="evidence" value="ECO:0007669"/>
    <property type="project" value="TreeGrafter"/>
</dbReference>
<dbReference type="GO" id="GO:0005960">
    <property type="term" value="C:glycine cleavage complex"/>
    <property type="evidence" value="ECO:0007669"/>
    <property type="project" value="InterPro"/>
</dbReference>
<dbReference type="GO" id="GO:0019464">
    <property type="term" value="P:glycine decarboxylation via glycine cleavage system"/>
    <property type="evidence" value="ECO:0007669"/>
    <property type="project" value="UniProtKB-UniRule"/>
</dbReference>
<dbReference type="CDD" id="cd06848">
    <property type="entry name" value="GCS_H"/>
    <property type="match status" value="1"/>
</dbReference>
<dbReference type="FunFam" id="2.40.50.100:FF:000011">
    <property type="entry name" value="Glycine cleavage system H protein"/>
    <property type="match status" value="1"/>
</dbReference>
<dbReference type="Gene3D" id="2.40.50.100">
    <property type="match status" value="1"/>
</dbReference>
<dbReference type="HAMAP" id="MF_00272">
    <property type="entry name" value="GcvH"/>
    <property type="match status" value="1"/>
</dbReference>
<dbReference type="InterPro" id="IPR003016">
    <property type="entry name" value="2-oxoA_DH_lipoyl-BS"/>
</dbReference>
<dbReference type="InterPro" id="IPR000089">
    <property type="entry name" value="Biotin_lipoyl"/>
</dbReference>
<dbReference type="InterPro" id="IPR002930">
    <property type="entry name" value="GCV_H"/>
</dbReference>
<dbReference type="InterPro" id="IPR033753">
    <property type="entry name" value="GCV_H/Fam206"/>
</dbReference>
<dbReference type="InterPro" id="IPR017453">
    <property type="entry name" value="GCV_H_sub"/>
</dbReference>
<dbReference type="InterPro" id="IPR011053">
    <property type="entry name" value="Single_hybrid_motif"/>
</dbReference>
<dbReference type="NCBIfam" id="TIGR00527">
    <property type="entry name" value="gcvH"/>
    <property type="match status" value="1"/>
</dbReference>
<dbReference type="NCBIfam" id="NF002270">
    <property type="entry name" value="PRK01202.1"/>
    <property type="match status" value="1"/>
</dbReference>
<dbReference type="PANTHER" id="PTHR11715">
    <property type="entry name" value="GLYCINE CLEAVAGE SYSTEM H PROTEIN"/>
    <property type="match status" value="1"/>
</dbReference>
<dbReference type="PANTHER" id="PTHR11715:SF3">
    <property type="entry name" value="GLYCINE CLEAVAGE SYSTEM H PROTEIN-RELATED"/>
    <property type="match status" value="1"/>
</dbReference>
<dbReference type="Pfam" id="PF01597">
    <property type="entry name" value="GCV_H"/>
    <property type="match status" value="1"/>
</dbReference>
<dbReference type="SUPFAM" id="SSF51230">
    <property type="entry name" value="Single hybrid motif"/>
    <property type="match status" value="1"/>
</dbReference>
<dbReference type="PROSITE" id="PS50968">
    <property type="entry name" value="BIOTINYL_LIPOYL"/>
    <property type="match status" value="1"/>
</dbReference>
<dbReference type="PROSITE" id="PS00189">
    <property type="entry name" value="LIPOYL"/>
    <property type="match status" value="1"/>
</dbReference>
<evidence type="ECO:0000255" key="1">
    <source>
        <dbReference type="HAMAP-Rule" id="MF_00272"/>
    </source>
</evidence>
<evidence type="ECO:0000255" key="2">
    <source>
        <dbReference type="PROSITE-ProRule" id="PRU01066"/>
    </source>
</evidence>
<sequence>MSNVPTELKYALSHEWVRADGDGVYSVGITEHAQELLGDMVFVDLPEVGSDVSAGSDCAVAESVKAASDIYAPISGEIVAVNTELENSPELVNSAPYTDGWLFSIKAADESELDNLLDADAYLAAIEE</sequence>
<name>GCSH_YERPA</name>
<comment type="function">
    <text evidence="1">The glycine cleavage system catalyzes the degradation of glycine. The H protein shuttles the methylamine group of glycine from the P protein to the T protein.</text>
</comment>
<comment type="cofactor">
    <cofactor evidence="1">
        <name>(R)-lipoate</name>
        <dbReference type="ChEBI" id="CHEBI:83088"/>
    </cofactor>
    <text evidence="1">Binds 1 lipoyl cofactor covalently.</text>
</comment>
<comment type="subunit">
    <text evidence="1">The glycine cleavage system is composed of four proteins: P, T, L and H.</text>
</comment>
<comment type="similarity">
    <text evidence="1">Belongs to the GcvH family.</text>
</comment>
<feature type="chain" id="PRO_0000302467" description="Glycine cleavage system H protein">
    <location>
        <begin position="1"/>
        <end position="128"/>
    </location>
</feature>
<feature type="domain" description="Lipoyl-binding" evidence="2">
    <location>
        <begin position="24"/>
        <end position="106"/>
    </location>
</feature>
<feature type="modified residue" description="N6-lipoyllysine" evidence="1">
    <location>
        <position position="65"/>
    </location>
</feature>
<reference key="1">
    <citation type="journal article" date="2006" name="J. Bacteriol.">
        <title>Complete genome sequence of Yersinia pestis strains Antiqua and Nepal516: evidence of gene reduction in an emerging pathogen.</title>
        <authorList>
            <person name="Chain P.S.G."/>
            <person name="Hu P."/>
            <person name="Malfatti S.A."/>
            <person name="Radnedge L."/>
            <person name="Larimer F."/>
            <person name="Vergez L.M."/>
            <person name="Worsham P."/>
            <person name="Chu M.C."/>
            <person name="Andersen G.L."/>
        </authorList>
    </citation>
    <scope>NUCLEOTIDE SEQUENCE [LARGE SCALE GENOMIC DNA]</scope>
    <source>
        <strain>Antiqua</strain>
    </source>
</reference>
<keyword id="KW-0450">Lipoyl</keyword>